<proteinExistence type="inferred from homology"/>
<dbReference type="EMBL" id="CP001068">
    <property type="protein sequence ID" value="ACD28440.1"/>
    <property type="molecule type" value="Genomic_DNA"/>
</dbReference>
<dbReference type="SMR" id="B2UF71"/>
<dbReference type="STRING" id="402626.Rpic_3318"/>
<dbReference type="KEGG" id="rpi:Rpic_3318"/>
<dbReference type="eggNOG" id="COG0080">
    <property type="taxonomic scope" value="Bacteria"/>
</dbReference>
<dbReference type="HOGENOM" id="CLU_074237_2_0_4"/>
<dbReference type="GO" id="GO:0022625">
    <property type="term" value="C:cytosolic large ribosomal subunit"/>
    <property type="evidence" value="ECO:0007669"/>
    <property type="project" value="TreeGrafter"/>
</dbReference>
<dbReference type="GO" id="GO:0070180">
    <property type="term" value="F:large ribosomal subunit rRNA binding"/>
    <property type="evidence" value="ECO:0007669"/>
    <property type="project" value="UniProtKB-UniRule"/>
</dbReference>
<dbReference type="GO" id="GO:0003735">
    <property type="term" value="F:structural constituent of ribosome"/>
    <property type="evidence" value="ECO:0007669"/>
    <property type="project" value="InterPro"/>
</dbReference>
<dbReference type="GO" id="GO:0006412">
    <property type="term" value="P:translation"/>
    <property type="evidence" value="ECO:0007669"/>
    <property type="project" value="UniProtKB-UniRule"/>
</dbReference>
<dbReference type="CDD" id="cd00349">
    <property type="entry name" value="Ribosomal_L11"/>
    <property type="match status" value="1"/>
</dbReference>
<dbReference type="FunFam" id="1.10.10.250:FF:000001">
    <property type="entry name" value="50S ribosomal protein L11"/>
    <property type="match status" value="1"/>
</dbReference>
<dbReference type="FunFam" id="3.30.1550.10:FF:000001">
    <property type="entry name" value="50S ribosomal protein L11"/>
    <property type="match status" value="1"/>
</dbReference>
<dbReference type="Gene3D" id="1.10.10.250">
    <property type="entry name" value="Ribosomal protein L11, C-terminal domain"/>
    <property type="match status" value="1"/>
</dbReference>
<dbReference type="Gene3D" id="3.30.1550.10">
    <property type="entry name" value="Ribosomal protein L11/L12, N-terminal domain"/>
    <property type="match status" value="1"/>
</dbReference>
<dbReference type="HAMAP" id="MF_00736">
    <property type="entry name" value="Ribosomal_uL11"/>
    <property type="match status" value="1"/>
</dbReference>
<dbReference type="InterPro" id="IPR000911">
    <property type="entry name" value="Ribosomal_uL11"/>
</dbReference>
<dbReference type="InterPro" id="IPR006519">
    <property type="entry name" value="Ribosomal_uL11_bac-typ"/>
</dbReference>
<dbReference type="InterPro" id="IPR020783">
    <property type="entry name" value="Ribosomal_uL11_C"/>
</dbReference>
<dbReference type="InterPro" id="IPR036769">
    <property type="entry name" value="Ribosomal_uL11_C_sf"/>
</dbReference>
<dbReference type="InterPro" id="IPR020785">
    <property type="entry name" value="Ribosomal_uL11_CS"/>
</dbReference>
<dbReference type="InterPro" id="IPR020784">
    <property type="entry name" value="Ribosomal_uL11_N"/>
</dbReference>
<dbReference type="InterPro" id="IPR036796">
    <property type="entry name" value="Ribosomal_uL11_N_sf"/>
</dbReference>
<dbReference type="NCBIfam" id="TIGR01632">
    <property type="entry name" value="L11_bact"/>
    <property type="match status" value="1"/>
</dbReference>
<dbReference type="PANTHER" id="PTHR11661">
    <property type="entry name" value="60S RIBOSOMAL PROTEIN L12"/>
    <property type="match status" value="1"/>
</dbReference>
<dbReference type="PANTHER" id="PTHR11661:SF1">
    <property type="entry name" value="LARGE RIBOSOMAL SUBUNIT PROTEIN UL11M"/>
    <property type="match status" value="1"/>
</dbReference>
<dbReference type="Pfam" id="PF00298">
    <property type="entry name" value="Ribosomal_L11"/>
    <property type="match status" value="1"/>
</dbReference>
<dbReference type="Pfam" id="PF03946">
    <property type="entry name" value="Ribosomal_L11_N"/>
    <property type="match status" value="1"/>
</dbReference>
<dbReference type="SMART" id="SM00649">
    <property type="entry name" value="RL11"/>
    <property type="match status" value="1"/>
</dbReference>
<dbReference type="SUPFAM" id="SSF54747">
    <property type="entry name" value="Ribosomal L11/L12e N-terminal domain"/>
    <property type="match status" value="1"/>
</dbReference>
<dbReference type="SUPFAM" id="SSF46906">
    <property type="entry name" value="Ribosomal protein L11, C-terminal domain"/>
    <property type="match status" value="1"/>
</dbReference>
<dbReference type="PROSITE" id="PS00359">
    <property type="entry name" value="RIBOSOMAL_L11"/>
    <property type="match status" value="1"/>
</dbReference>
<accession>B2UF71</accession>
<reference key="1">
    <citation type="submission" date="2008-05" db="EMBL/GenBank/DDBJ databases">
        <title>Complete sequence of chromosome 1 of Ralstonia pickettii 12J.</title>
        <authorList>
            <person name="Lucas S."/>
            <person name="Copeland A."/>
            <person name="Lapidus A."/>
            <person name="Glavina del Rio T."/>
            <person name="Dalin E."/>
            <person name="Tice H."/>
            <person name="Bruce D."/>
            <person name="Goodwin L."/>
            <person name="Pitluck S."/>
            <person name="Meincke L."/>
            <person name="Brettin T."/>
            <person name="Detter J.C."/>
            <person name="Han C."/>
            <person name="Kuske C.R."/>
            <person name="Schmutz J."/>
            <person name="Larimer F."/>
            <person name="Land M."/>
            <person name="Hauser L."/>
            <person name="Kyrpides N."/>
            <person name="Mikhailova N."/>
            <person name="Marsh T."/>
            <person name="Richardson P."/>
        </authorList>
    </citation>
    <scope>NUCLEOTIDE SEQUENCE [LARGE SCALE GENOMIC DNA]</scope>
    <source>
        <strain>12J</strain>
    </source>
</reference>
<gene>
    <name evidence="1" type="primary">rplK</name>
    <name type="ordered locus">Rpic_3318</name>
</gene>
<sequence>MAKKIIGFIKLQIPAGKANPSPPVGPALGQRGLNIMEFCKAFNAQTQGMEPGLPVPVVITAFADKSFTFVMKSPPATVLIKKAAGIQKGSAKPHTDKVGKITRAQAEEIAKAKNADLTAADLDAAVRTIAGSARSMGITVEGL</sequence>
<comment type="function">
    <text evidence="1">Forms part of the ribosomal stalk which helps the ribosome interact with GTP-bound translation factors.</text>
</comment>
<comment type="subunit">
    <text evidence="1">Part of the ribosomal stalk of the 50S ribosomal subunit. Interacts with L10 and the large rRNA to form the base of the stalk. L10 forms an elongated spine to which L12 dimers bind in a sequential fashion forming a multimeric L10(L12)X complex.</text>
</comment>
<comment type="PTM">
    <text evidence="1">One or more lysine residues are methylated.</text>
</comment>
<comment type="similarity">
    <text evidence="1">Belongs to the universal ribosomal protein uL11 family.</text>
</comment>
<evidence type="ECO:0000255" key="1">
    <source>
        <dbReference type="HAMAP-Rule" id="MF_00736"/>
    </source>
</evidence>
<evidence type="ECO:0000305" key="2"/>
<protein>
    <recommendedName>
        <fullName evidence="1">Large ribosomal subunit protein uL11</fullName>
    </recommendedName>
    <alternativeName>
        <fullName evidence="2">50S ribosomal protein L11</fullName>
    </alternativeName>
</protein>
<feature type="chain" id="PRO_1000195696" description="Large ribosomal subunit protein uL11">
    <location>
        <begin position="1"/>
        <end position="143"/>
    </location>
</feature>
<name>RL11_RALPJ</name>
<organism>
    <name type="scientific">Ralstonia pickettii (strain 12J)</name>
    <dbReference type="NCBI Taxonomy" id="402626"/>
    <lineage>
        <taxon>Bacteria</taxon>
        <taxon>Pseudomonadati</taxon>
        <taxon>Pseudomonadota</taxon>
        <taxon>Betaproteobacteria</taxon>
        <taxon>Burkholderiales</taxon>
        <taxon>Burkholderiaceae</taxon>
        <taxon>Ralstonia</taxon>
    </lineage>
</organism>
<keyword id="KW-0488">Methylation</keyword>
<keyword id="KW-0687">Ribonucleoprotein</keyword>
<keyword id="KW-0689">Ribosomal protein</keyword>
<keyword id="KW-0694">RNA-binding</keyword>
<keyword id="KW-0699">rRNA-binding</keyword>